<organism>
    <name type="scientific">Staphylococcus aureus (strain USA300)</name>
    <dbReference type="NCBI Taxonomy" id="367830"/>
    <lineage>
        <taxon>Bacteria</taxon>
        <taxon>Bacillati</taxon>
        <taxon>Bacillota</taxon>
        <taxon>Bacilli</taxon>
        <taxon>Bacillales</taxon>
        <taxon>Staphylococcaceae</taxon>
        <taxon>Staphylococcus</taxon>
    </lineage>
</organism>
<gene>
    <name evidence="1" type="primary">thyA</name>
    <name type="ordered locus">SAUSA300_1320</name>
</gene>
<keyword id="KW-0963">Cytoplasm</keyword>
<keyword id="KW-0489">Methyltransferase</keyword>
<keyword id="KW-0545">Nucleotide biosynthesis</keyword>
<keyword id="KW-0808">Transferase</keyword>
<comment type="function">
    <text evidence="1">Catalyzes the reductive methylation of 2'-deoxyuridine-5'-monophosphate (dUMP) to 2'-deoxythymidine-5'-monophosphate (dTMP) while utilizing 5,10-methylenetetrahydrofolate (mTHF) as the methyl donor and reductant in the reaction, yielding dihydrofolate (DHF) as a by-product. This enzymatic reaction provides an intracellular de novo source of dTMP, an essential precursor for DNA biosynthesis.</text>
</comment>
<comment type="catalytic activity">
    <reaction evidence="1">
        <text>dUMP + (6R)-5,10-methylene-5,6,7,8-tetrahydrofolate = 7,8-dihydrofolate + dTMP</text>
        <dbReference type="Rhea" id="RHEA:12104"/>
        <dbReference type="ChEBI" id="CHEBI:15636"/>
        <dbReference type="ChEBI" id="CHEBI:57451"/>
        <dbReference type="ChEBI" id="CHEBI:63528"/>
        <dbReference type="ChEBI" id="CHEBI:246422"/>
        <dbReference type="EC" id="2.1.1.45"/>
    </reaction>
</comment>
<comment type="pathway">
    <text evidence="1">Pyrimidine metabolism; dTTP biosynthesis.</text>
</comment>
<comment type="subunit">
    <text evidence="1">Homodimer.</text>
</comment>
<comment type="subcellular location">
    <subcellularLocation>
        <location evidence="1">Cytoplasm</location>
    </subcellularLocation>
</comment>
<comment type="similarity">
    <text evidence="1">Belongs to the thymidylate synthase family. Bacterial-type ThyA subfamily.</text>
</comment>
<dbReference type="EC" id="2.1.1.45" evidence="1"/>
<dbReference type="EMBL" id="CP000255">
    <property type="protein sequence ID" value="ABD20816.1"/>
    <property type="molecule type" value="Genomic_DNA"/>
</dbReference>
<dbReference type="RefSeq" id="WP_000934885.1">
    <property type="nucleotide sequence ID" value="NZ_CP027476.1"/>
</dbReference>
<dbReference type="SMR" id="Q2FH11"/>
<dbReference type="KEGG" id="saa:SAUSA300_1320"/>
<dbReference type="HOGENOM" id="CLU_021669_0_2_9"/>
<dbReference type="OMA" id="AYGRFWR"/>
<dbReference type="UniPathway" id="UPA00575"/>
<dbReference type="Proteomes" id="UP000001939">
    <property type="component" value="Chromosome"/>
</dbReference>
<dbReference type="GO" id="GO:0005829">
    <property type="term" value="C:cytosol"/>
    <property type="evidence" value="ECO:0007669"/>
    <property type="project" value="TreeGrafter"/>
</dbReference>
<dbReference type="GO" id="GO:0004799">
    <property type="term" value="F:thymidylate synthase activity"/>
    <property type="evidence" value="ECO:0007669"/>
    <property type="project" value="UniProtKB-UniRule"/>
</dbReference>
<dbReference type="GO" id="GO:0006231">
    <property type="term" value="P:dTMP biosynthetic process"/>
    <property type="evidence" value="ECO:0007669"/>
    <property type="project" value="UniProtKB-UniRule"/>
</dbReference>
<dbReference type="GO" id="GO:0006235">
    <property type="term" value="P:dTTP biosynthetic process"/>
    <property type="evidence" value="ECO:0007669"/>
    <property type="project" value="UniProtKB-UniRule"/>
</dbReference>
<dbReference type="GO" id="GO:0032259">
    <property type="term" value="P:methylation"/>
    <property type="evidence" value="ECO:0007669"/>
    <property type="project" value="UniProtKB-KW"/>
</dbReference>
<dbReference type="CDD" id="cd00351">
    <property type="entry name" value="TS_Pyrimidine_HMase"/>
    <property type="match status" value="1"/>
</dbReference>
<dbReference type="Gene3D" id="3.30.572.10">
    <property type="entry name" value="Thymidylate synthase/dCMP hydroxymethylase domain"/>
    <property type="match status" value="1"/>
</dbReference>
<dbReference type="HAMAP" id="MF_00008">
    <property type="entry name" value="Thymidy_synth_bact"/>
    <property type="match status" value="1"/>
</dbReference>
<dbReference type="InterPro" id="IPR045097">
    <property type="entry name" value="Thymidate_synth/dCMP_Mease"/>
</dbReference>
<dbReference type="InterPro" id="IPR023451">
    <property type="entry name" value="Thymidate_synth/dCMP_Mease_dom"/>
</dbReference>
<dbReference type="InterPro" id="IPR036926">
    <property type="entry name" value="Thymidate_synth/dCMP_Mease_sf"/>
</dbReference>
<dbReference type="InterPro" id="IPR000398">
    <property type="entry name" value="Thymidylate_synthase"/>
</dbReference>
<dbReference type="InterPro" id="IPR020940">
    <property type="entry name" value="Thymidylate_synthase_AS"/>
</dbReference>
<dbReference type="NCBIfam" id="NF002496">
    <property type="entry name" value="PRK01827.1-2"/>
    <property type="match status" value="1"/>
</dbReference>
<dbReference type="NCBIfam" id="TIGR03284">
    <property type="entry name" value="thym_sym"/>
    <property type="match status" value="1"/>
</dbReference>
<dbReference type="PANTHER" id="PTHR11548:SF9">
    <property type="entry name" value="THYMIDYLATE SYNTHASE"/>
    <property type="match status" value="1"/>
</dbReference>
<dbReference type="PANTHER" id="PTHR11548">
    <property type="entry name" value="THYMIDYLATE SYNTHASE 1"/>
    <property type="match status" value="1"/>
</dbReference>
<dbReference type="Pfam" id="PF00303">
    <property type="entry name" value="Thymidylat_synt"/>
    <property type="match status" value="1"/>
</dbReference>
<dbReference type="PRINTS" id="PR00108">
    <property type="entry name" value="THYMDSNTHASE"/>
</dbReference>
<dbReference type="SUPFAM" id="SSF55831">
    <property type="entry name" value="Thymidylate synthase/dCMP hydroxymethylase"/>
    <property type="match status" value="1"/>
</dbReference>
<dbReference type="PROSITE" id="PS00091">
    <property type="entry name" value="THYMIDYLATE_SYNTHASE"/>
    <property type="match status" value="1"/>
</dbReference>
<evidence type="ECO:0000255" key="1">
    <source>
        <dbReference type="HAMAP-Rule" id="MF_00008"/>
    </source>
</evidence>
<sequence>MLNSFDAAYHSLCEEVLEIGNTRNDRTNTGTISKFGHQLRFDLSKGFPLLTTKKVSFKLVATELLWFIKGDTNIQYLLKYNNNIWNEWAFENYIKSDEYKGPDMTDFGHRALSDPEFNEQYKEQMKQFKQRILEDDTFAKQFGDLGNVYGKQWRDWVDKDGNHFDQLKTVIEQIKHNPDSRRHIVSAWNPTEIDTMALPPCHTMFQFYVQDGKLSCQLYQRSADIFLGVPFNIASYALLTHLIAKECGLEVGEFVHTFGDAHIYSNHIDAIQTQLARESFNPPTLKINSDKSIFDINYEDLEIVDYESHPAIKAPIAV</sequence>
<protein>
    <recommendedName>
        <fullName evidence="1">Thymidylate synthase</fullName>
        <shortName evidence="1">TS</shortName>
        <shortName evidence="1">TSase</shortName>
        <ecNumber evidence="1">2.1.1.45</ecNumber>
    </recommendedName>
</protein>
<reference key="1">
    <citation type="journal article" date="2006" name="Lancet">
        <title>Complete genome sequence of USA300, an epidemic clone of community-acquired meticillin-resistant Staphylococcus aureus.</title>
        <authorList>
            <person name="Diep B.A."/>
            <person name="Gill S.R."/>
            <person name="Chang R.F."/>
            <person name="Phan T.H."/>
            <person name="Chen J.H."/>
            <person name="Davidson M.G."/>
            <person name="Lin F."/>
            <person name="Lin J."/>
            <person name="Carleton H.A."/>
            <person name="Mongodin E.F."/>
            <person name="Sensabaugh G.F."/>
            <person name="Perdreau-Remington F."/>
        </authorList>
    </citation>
    <scope>NUCLEOTIDE SEQUENCE [LARGE SCALE GENOMIC DNA]</scope>
    <source>
        <strain>USA300</strain>
    </source>
</reference>
<accession>Q2FH11</accession>
<name>TYSY_STAA3</name>
<proteinExistence type="inferred from homology"/>
<feature type="chain" id="PRO_1000000686" description="Thymidylate synthase">
    <location>
        <begin position="1"/>
        <end position="318"/>
    </location>
</feature>
<feature type="active site" description="Nucleophile" evidence="1">
    <location>
        <position position="201"/>
    </location>
</feature>
<feature type="binding site" description="in other chain" evidence="1">
    <location>
        <position position="26"/>
    </location>
    <ligand>
        <name>dUMP</name>
        <dbReference type="ChEBI" id="CHEBI:246422"/>
        <note>ligand shared between dimeric partners</note>
    </ligand>
</feature>
<feature type="binding site" evidence="1">
    <location>
        <begin position="181"/>
        <end position="182"/>
    </location>
    <ligand>
        <name>dUMP</name>
        <dbReference type="ChEBI" id="CHEBI:246422"/>
        <note>ligand shared between dimeric partners</note>
    </ligand>
</feature>
<feature type="binding site" description="in other chain" evidence="1">
    <location>
        <begin position="221"/>
        <end position="224"/>
    </location>
    <ligand>
        <name>dUMP</name>
        <dbReference type="ChEBI" id="CHEBI:246422"/>
        <note>ligand shared between dimeric partners</note>
    </ligand>
</feature>
<feature type="binding site" evidence="1">
    <location>
        <position position="224"/>
    </location>
    <ligand>
        <name>(6R)-5,10-methylene-5,6,7,8-tetrahydrofolate</name>
        <dbReference type="ChEBI" id="CHEBI:15636"/>
    </ligand>
</feature>
<feature type="binding site" description="in other chain" evidence="1">
    <location>
        <position position="232"/>
    </location>
    <ligand>
        <name>dUMP</name>
        <dbReference type="ChEBI" id="CHEBI:246422"/>
        <note>ligand shared between dimeric partners</note>
    </ligand>
</feature>
<feature type="binding site" description="in other chain" evidence="1">
    <location>
        <begin position="262"/>
        <end position="264"/>
    </location>
    <ligand>
        <name>dUMP</name>
        <dbReference type="ChEBI" id="CHEBI:246422"/>
        <note>ligand shared between dimeric partners</note>
    </ligand>
</feature>
<feature type="binding site" evidence="1">
    <location>
        <position position="317"/>
    </location>
    <ligand>
        <name>(6R)-5,10-methylene-5,6,7,8-tetrahydrofolate</name>
        <dbReference type="ChEBI" id="CHEBI:15636"/>
    </ligand>
</feature>